<protein>
    <recommendedName>
        <fullName evidence="1">ATP-dependent Clp protease ATP-binding subunit ClpX</fullName>
    </recommendedName>
</protein>
<reference key="1">
    <citation type="journal article" date="2005" name="Nat. Biotechnol.">
        <title>Complete genome sequence of the acetic acid bacterium Gluconobacter oxydans.</title>
        <authorList>
            <person name="Prust C."/>
            <person name="Hoffmeister M."/>
            <person name="Liesegang H."/>
            <person name="Wiezer A."/>
            <person name="Fricke W.F."/>
            <person name="Ehrenreich A."/>
            <person name="Gottschalk G."/>
            <person name="Deppenmeier U."/>
        </authorList>
    </citation>
    <scope>NUCLEOTIDE SEQUENCE [LARGE SCALE GENOMIC DNA]</scope>
    <source>
        <strain>621H</strain>
    </source>
</reference>
<comment type="function">
    <text evidence="1">ATP-dependent specificity component of the Clp protease. It directs the protease to specific substrates. Can perform chaperone functions in the absence of ClpP.</text>
</comment>
<comment type="subunit">
    <text evidence="1">Component of the ClpX-ClpP complex. Forms a hexameric ring that, in the presence of ATP, binds to fourteen ClpP subunits assembled into a disk-like structure with a central cavity, resembling the structure of eukaryotic proteasomes.</text>
</comment>
<comment type="similarity">
    <text evidence="1">Belongs to the ClpX chaperone family.</text>
</comment>
<gene>
    <name evidence="1" type="primary">clpX</name>
    <name type="ordered locus">GOX0086</name>
</gene>
<name>CLPX_GLUOX</name>
<sequence length="421" mass="46117">MSNKSGDSKNTLYCSFCGKSQHEVRKLIAGPTVFICDECVELCMDIIREEHKTHLVKSRDGVPTPKEICKVLDDYVIGQFEAKRALSVAVHNHYKRLAHAAKSSDIEIAKSNILLIGPTGSGKTLLAQTLARILDVPFTMADATTLTEAGYVGEDVENIILKLLQSADYNVDRAQRGIVYIDEIDKISRKSDNPSITRDVSGEGVQQALLKLMEGTVASVPPQGGRKHPQQEFLQVDTTNMLFICGGAFAVWTRSFRRVARDRASASVQMCVLMTSVVLGAILQSVEPEDLLKFGLIPEFIGRLPVIAALNDLDESALIQILSKPKNALIKQYGRLFEMEGVKLTFTEDALAAIAKRAIERKTGARGLRSILESILLGTMFDLPGLEGVEEVVINRDVAENKAQPVYVYGKGKSEPAEQSA</sequence>
<proteinExistence type="inferred from homology"/>
<keyword id="KW-0067">ATP-binding</keyword>
<keyword id="KW-0143">Chaperone</keyword>
<keyword id="KW-0479">Metal-binding</keyword>
<keyword id="KW-0547">Nucleotide-binding</keyword>
<keyword id="KW-1185">Reference proteome</keyword>
<keyword id="KW-0862">Zinc</keyword>
<organism>
    <name type="scientific">Gluconobacter oxydans (strain 621H)</name>
    <name type="common">Gluconobacter suboxydans</name>
    <dbReference type="NCBI Taxonomy" id="290633"/>
    <lineage>
        <taxon>Bacteria</taxon>
        <taxon>Pseudomonadati</taxon>
        <taxon>Pseudomonadota</taxon>
        <taxon>Alphaproteobacteria</taxon>
        <taxon>Acetobacterales</taxon>
        <taxon>Acetobacteraceae</taxon>
        <taxon>Gluconobacter</taxon>
    </lineage>
</organism>
<feature type="chain" id="PRO_1000071622" description="ATP-dependent Clp protease ATP-binding subunit ClpX">
    <location>
        <begin position="1"/>
        <end position="421"/>
    </location>
</feature>
<feature type="domain" description="ClpX-type ZB" evidence="2">
    <location>
        <begin position="2"/>
        <end position="55"/>
    </location>
</feature>
<feature type="binding site" evidence="2">
    <location>
        <position position="14"/>
    </location>
    <ligand>
        <name>Zn(2+)</name>
        <dbReference type="ChEBI" id="CHEBI:29105"/>
    </ligand>
</feature>
<feature type="binding site" evidence="2">
    <location>
        <position position="17"/>
    </location>
    <ligand>
        <name>Zn(2+)</name>
        <dbReference type="ChEBI" id="CHEBI:29105"/>
    </ligand>
</feature>
<feature type="binding site" evidence="2">
    <location>
        <position position="36"/>
    </location>
    <ligand>
        <name>Zn(2+)</name>
        <dbReference type="ChEBI" id="CHEBI:29105"/>
    </ligand>
</feature>
<feature type="binding site" evidence="2">
    <location>
        <position position="39"/>
    </location>
    <ligand>
        <name>Zn(2+)</name>
        <dbReference type="ChEBI" id="CHEBI:29105"/>
    </ligand>
</feature>
<feature type="binding site" evidence="1">
    <location>
        <begin position="118"/>
        <end position="125"/>
    </location>
    <ligand>
        <name>ATP</name>
        <dbReference type="ChEBI" id="CHEBI:30616"/>
    </ligand>
</feature>
<accession>Q5FUR4</accession>
<dbReference type="EMBL" id="CP000009">
    <property type="protein sequence ID" value="AAW59882.1"/>
    <property type="molecule type" value="Genomic_DNA"/>
</dbReference>
<dbReference type="RefSeq" id="WP_011251686.1">
    <property type="nucleotide sequence ID" value="NC_006677.1"/>
</dbReference>
<dbReference type="SMR" id="Q5FUR4"/>
<dbReference type="STRING" id="290633.GOX0086"/>
<dbReference type="KEGG" id="gox:GOX0086"/>
<dbReference type="eggNOG" id="COG1219">
    <property type="taxonomic scope" value="Bacteria"/>
</dbReference>
<dbReference type="HOGENOM" id="CLU_014218_8_2_5"/>
<dbReference type="Proteomes" id="UP000006375">
    <property type="component" value="Chromosome"/>
</dbReference>
<dbReference type="GO" id="GO:0009376">
    <property type="term" value="C:HslUV protease complex"/>
    <property type="evidence" value="ECO:0007669"/>
    <property type="project" value="TreeGrafter"/>
</dbReference>
<dbReference type="GO" id="GO:0005524">
    <property type="term" value="F:ATP binding"/>
    <property type="evidence" value="ECO:0007669"/>
    <property type="project" value="UniProtKB-UniRule"/>
</dbReference>
<dbReference type="GO" id="GO:0016887">
    <property type="term" value="F:ATP hydrolysis activity"/>
    <property type="evidence" value="ECO:0007669"/>
    <property type="project" value="InterPro"/>
</dbReference>
<dbReference type="GO" id="GO:0140662">
    <property type="term" value="F:ATP-dependent protein folding chaperone"/>
    <property type="evidence" value="ECO:0007669"/>
    <property type="project" value="InterPro"/>
</dbReference>
<dbReference type="GO" id="GO:0046983">
    <property type="term" value="F:protein dimerization activity"/>
    <property type="evidence" value="ECO:0007669"/>
    <property type="project" value="InterPro"/>
</dbReference>
<dbReference type="GO" id="GO:0051082">
    <property type="term" value="F:unfolded protein binding"/>
    <property type="evidence" value="ECO:0007669"/>
    <property type="project" value="UniProtKB-UniRule"/>
</dbReference>
<dbReference type="GO" id="GO:0008270">
    <property type="term" value="F:zinc ion binding"/>
    <property type="evidence" value="ECO:0007669"/>
    <property type="project" value="InterPro"/>
</dbReference>
<dbReference type="GO" id="GO:0051301">
    <property type="term" value="P:cell division"/>
    <property type="evidence" value="ECO:0007669"/>
    <property type="project" value="TreeGrafter"/>
</dbReference>
<dbReference type="GO" id="GO:0051603">
    <property type="term" value="P:proteolysis involved in protein catabolic process"/>
    <property type="evidence" value="ECO:0007669"/>
    <property type="project" value="TreeGrafter"/>
</dbReference>
<dbReference type="CDD" id="cd19497">
    <property type="entry name" value="RecA-like_ClpX"/>
    <property type="match status" value="1"/>
</dbReference>
<dbReference type="FunFam" id="1.10.8.60:FF:000002">
    <property type="entry name" value="ATP-dependent Clp protease ATP-binding subunit ClpX"/>
    <property type="match status" value="1"/>
</dbReference>
<dbReference type="FunFam" id="3.40.50.300:FF:000005">
    <property type="entry name" value="ATP-dependent Clp protease ATP-binding subunit ClpX"/>
    <property type="match status" value="1"/>
</dbReference>
<dbReference type="Gene3D" id="1.10.8.60">
    <property type="match status" value="1"/>
</dbReference>
<dbReference type="Gene3D" id="6.20.220.10">
    <property type="entry name" value="ClpX chaperone, C4-type zinc finger domain"/>
    <property type="match status" value="1"/>
</dbReference>
<dbReference type="Gene3D" id="3.40.50.300">
    <property type="entry name" value="P-loop containing nucleotide triphosphate hydrolases"/>
    <property type="match status" value="1"/>
</dbReference>
<dbReference type="HAMAP" id="MF_00175">
    <property type="entry name" value="ClpX"/>
    <property type="match status" value="1"/>
</dbReference>
<dbReference type="InterPro" id="IPR003593">
    <property type="entry name" value="AAA+_ATPase"/>
</dbReference>
<dbReference type="InterPro" id="IPR050052">
    <property type="entry name" value="ATP-dep_Clp_protease_ClpX"/>
</dbReference>
<dbReference type="InterPro" id="IPR003959">
    <property type="entry name" value="ATPase_AAA_core"/>
</dbReference>
<dbReference type="InterPro" id="IPR019489">
    <property type="entry name" value="Clp_ATPase_C"/>
</dbReference>
<dbReference type="InterPro" id="IPR004487">
    <property type="entry name" value="Clp_protease_ATP-bd_su_ClpX"/>
</dbReference>
<dbReference type="InterPro" id="IPR046425">
    <property type="entry name" value="ClpX_bact"/>
</dbReference>
<dbReference type="InterPro" id="IPR027417">
    <property type="entry name" value="P-loop_NTPase"/>
</dbReference>
<dbReference type="InterPro" id="IPR010603">
    <property type="entry name" value="Znf_CppX_C4"/>
</dbReference>
<dbReference type="InterPro" id="IPR038366">
    <property type="entry name" value="Znf_CppX_C4_sf"/>
</dbReference>
<dbReference type="NCBIfam" id="TIGR00382">
    <property type="entry name" value="clpX"/>
    <property type="match status" value="1"/>
</dbReference>
<dbReference type="NCBIfam" id="NF003745">
    <property type="entry name" value="PRK05342.1"/>
    <property type="match status" value="1"/>
</dbReference>
<dbReference type="PANTHER" id="PTHR48102:SF7">
    <property type="entry name" value="ATP-DEPENDENT CLP PROTEASE ATP-BINDING SUBUNIT CLPX-LIKE, MITOCHONDRIAL"/>
    <property type="match status" value="1"/>
</dbReference>
<dbReference type="PANTHER" id="PTHR48102">
    <property type="entry name" value="ATP-DEPENDENT CLP PROTEASE ATP-BINDING SUBUNIT CLPX-LIKE, MITOCHONDRIAL-RELATED"/>
    <property type="match status" value="1"/>
</dbReference>
<dbReference type="Pfam" id="PF07724">
    <property type="entry name" value="AAA_2"/>
    <property type="match status" value="1"/>
</dbReference>
<dbReference type="Pfam" id="PF10431">
    <property type="entry name" value="ClpB_D2-small"/>
    <property type="match status" value="1"/>
</dbReference>
<dbReference type="Pfam" id="PF06689">
    <property type="entry name" value="zf-C4_ClpX"/>
    <property type="match status" value="1"/>
</dbReference>
<dbReference type="SMART" id="SM00382">
    <property type="entry name" value="AAA"/>
    <property type="match status" value="1"/>
</dbReference>
<dbReference type="SMART" id="SM01086">
    <property type="entry name" value="ClpB_D2-small"/>
    <property type="match status" value="1"/>
</dbReference>
<dbReference type="SMART" id="SM00994">
    <property type="entry name" value="zf-C4_ClpX"/>
    <property type="match status" value="1"/>
</dbReference>
<dbReference type="SUPFAM" id="SSF57716">
    <property type="entry name" value="Glucocorticoid receptor-like (DNA-binding domain)"/>
    <property type="match status" value="1"/>
</dbReference>
<dbReference type="SUPFAM" id="SSF52540">
    <property type="entry name" value="P-loop containing nucleoside triphosphate hydrolases"/>
    <property type="match status" value="1"/>
</dbReference>
<dbReference type="PROSITE" id="PS51902">
    <property type="entry name" value="CLPX_ZB"/>
    <property type="match status" value="1"/>
</dbReference>
<evidence type="ECO:0000255" key="1">
    <source>
        <dbReference type="HAMAP-Rule" id="MF_00175"/>
    </source>
</evidence>
<evidence type="ECO:0000255" key="2">
    <source>
        <dbReference type="PROSITE-ProRule" id="PRU01250"/>
    </source>
</evidence>